<feature type="chain" id="PRO_0000108135" description="Oleosin-B2">
    <location>
        <begin position="1" status="less than"/>
        <end position="183"/>
    </location>
</feature>
<feature type="chain" id="PRO_0000284379" description="Pollen coat protein B2">
    <location>
        <begin position="104"/>
        <end position="183"/>
    </location>
</feature>
<feature type="transmembrane region" description="Helical" evidence="1">
    <location>
        <begin position="24"/>
        <end position="44"/>
    </location>
</feature>
<feature type="transmembrane region" description="Helical" evidence="1">
    <location>
        <begin position="46"/>
        <end position="66"/>
    </location>
</feature>
<feature type="transmembrane region" description="Helical" evidence="1">
    <location>
        <begin position="72"/>
        <end position="92"/>
    </location>
</feature>
<feature type="region of interest" description="Polar">
    <location>
        <begin position="1" status="less than"/>
        <end position="23"/>
    </location>
</feature>
<feature type="region of interest" description="Hydrophobic">
    <location>
        <begin position="24"/>
        <end position="95"/>
    </location>
</feature>
<feature type="sequence conflict" description="In Ref. 2; AA sequence." evidence="4" ref="2">
    <original>L</original>
    <variation>I</variation>
    <location>
        <position position="108"/>
    </location>
</feature>
<feature type="non-terminal residue">
    <location>
        <position position="1"/>
    </location>
</feature>
<sequence>QASIFSRFFRMFSFIFPFVNVIKLIIASVTSLVCLAFSCVALGGSAVALIVSTPLFIMFSPILVPATIATTLLASGLMAGTTLGLTGIGLIMGLVRTAGGVSLLQSPLRKIIVNRIKARLGGGGGGSRLARLKKILGLLNKLRGMGAGGAAAPAAEPAPAAEAAPAAEAAPAAAPAAAPAAAP</sequence>
<organism>
    <name type="scientific">Brassica napus</name>
    <name type="common">Rape</name>
    <dbReference type="NCBI Taxonomy" id="3708"/>
    <lineage>
        <taxon>Eukaryota</taxon>
        <taxon>Viridiplantae</taxon>
        <taxon>Streptophyta</taxon>
        <taxon>Embryophyta</taxon>
        <taxon>Tracheophyta</taxon>
        <taxon>Spermatophyta</taxon>
        <taxon>Magnoliopsida</taxon>
        <taxon>eudicotyledons</taxon>
        <taxon>Gunneridae</taxon>
        <taxon>Pentapetalae</taxon>
        <taxon>rosids</taxon>
        <taxon>malvids</taxon>
        <taxon>Brassicales</taxon>
        <taxon>Brassicaceae</taxon>
        <taxon>Brassiceae</taxon>
        <taxon>Brassica</taxon>
    </lineage>
</organism>
<reference key="1">
    <citation type="journal article" date="1993" name="Plant J.">
        <title>Characterization of a new class of oleosins suggests a male gametophyte-specific lipid storage pathway.</title>
        <authorList>
            <person name="Roberts M.R."/>
            <person name="Hodge R."/>
            <person name="Ross J.H.E."/>
            <person name="Sorensen A."/>
            <person name="Murphy D.J."/>
            <person name="Draper J."/>
            <person name="Scott R."/>
        </authorList>
    </citation>
    <scope>NUCLEOTIDE SEQUENCE [MRNA]</scope>
    <scope>TISSUE SPECIFICITY</scope>
    <scope>DEVELOPMENTAL STAGE</scope>
    <source>
        <tissue>Anther</tissue>
    </source>
</reference>
<reference key="2">
    <citation type="journal article" date="1998" name="Plant J.">
        <title>Biosynthesis, targeting and processing of oleosin-like proteins, which are major pollen coat components in Brassica napus.</title>
        <authorList>
            <person name="Murphy D.J."/>
            <person name="Ross J.H.E."/>
        </authorList>
    </citation>
    <scope>PROTEIN SEQUENCE OF 104-120</scope>
    <scope>FUNCTION</scope>
    <source>
        <strain>cv. Topas</strain>
        <tissue>Pollen</tissue>
    </source>
</reference>
<accession>P29526</accession>
<accession>P81097</accession>
<gene>
    <name type="primary">OlnB2</name>
    <name type="synonym">C98</name>
</gene>
<dbReference type="EMBL" id="X67142">
    <property type="protein sequence ID" value="CAA47623.1"/>
    <property type="molecule type" value="mRNA"/>
</dbReference>
<dbReference type="PIR" id="S24960">
    <property type="entry name" value="S24960"/>
</dbReference>
<dbReference type="GO" id="GO:0016020">
    <property type="term" value="C:membrane"/>
    <property type="evidence" value="ECO:0007669"/>
    <property type="project" value="UniProtKB-SubCell"/>
</dbReference>
<dbReference type="GO" id="GO:0012511">
    <property type="term" value="C:monolayer-surrounded lipid storage body"/>
    <property type="evidence" value="ECO:0007669"/>
    <property type="project" value="InterPro"/>
</dbReference>
<dbReference type="GO" id="GO:0009791">
    <property type="term" value="P:post-embryonic development"/>
    <property type="evidence" value="ECO:0007669"/>
    <property type="project" value="UniProtKB-ARBA"/>
</dbReference>
<dbReference type="GO" id="GO:0048608">
    <property type="term" value="P:reproductive structure development"/>
    <property type="evidence" value="ECO:0007669"/>
    <property type="project" value="UniProtKB-ARBA"/>
</dbReference>
<dbReference type="InterPro" id="IPR000136">
    <property type="entry name" value="Oleosin"/>
</dbReference>
<dbReference type="PANTHER" id="PTHR33203:SF26">
    <property type="entry name" value="GLYCINE-RICH PROTEIN-RELATED"/>
    <property type="match status" value="1"/>
</dbReference>
<dbReference type="PANTHER" id="PTHR33203">
    <property type="entry name" value="OLEOSIN"/>
    <property type="match status" value="1"/>
</dbReference>
<dbReference type="Pfam" id="PF01277">
    <property type="entry name" value="Oleosin"/>
    <property type="match status" value="1"/>
</dbReference>
<dbReference type="PROSITE" id="PS00811">
    <property type="entry name" value="OLEOSINS"/>
    <property type="match status" value="1"/>
</dbReference>
<evidence type="ECO:0000255" key="1"/>
<evidence type="ECO:0000269" key="2">
    <source>
    </source>
</evidence>
<evidence type="ECO:0000269" key="3">
    <source>
    </source>
</evidence>
<evidence type="ECO:0000305" key="4"/>
<protein>
    <recommendedName>
        <fullName>Oleosin-B2</fullName>
    </recommendedName>
    <alternativeName>
        <fullName>Oleosin-C98</fullName>
    </alternativeName>
    <component>
        <recommendedName>
            <fullName>Pollen coat protein B2</fullName>
        </recommendedName>
    </component>
</protein>
<comment type="function">
    <text evidence="3">Many of the major pollen coat proteins are derived from endoproteolytic cleavage of oleosin-like proteins.</text>
</comment>
<comment type="subcellular location">
    <subcellularLocation>
        <location>Lipid droplet</location>
    </subcellularLocation>
    <subcellularLocation>
        <location>Membrane</location>
        <topology>Multi-pass membrane protein</topology>
    </subcellularLocation>
    <text>Surface of oil bodies. Oleosins exist at a monolayer lipid/water interface.</text>
</comment>
<comment type="tissue specificity">
    <text evidence="2">The full-length protein is found in the tapetal lipid bodies of immature anthers, the proteolytically cleaved C-terminal product is found on the coats of pollen grains. Not present in seeds.</text>
</comment>
<comment type="developmental stage">
    <text evidence="2">Expressed in developing buds, until the pollen is near to maturity.</text>
</comment>
<comment type="similarity">
    <text evidence="4">Belongs to the oleosin family.</text>
</comment>
<proteinExistence type="evidence at protein level"/>
<name>OLNB2_BRANA</name>
<keyword id="KW-0903">Direct protein sequencing</keyword>
<keyword id="KW-0551">Lipid droplet</keyword>
<keyword id="KW-0472">Membrane</keyword>
<keyword id="KW-0812">Transmembrane</keyword>
<keyword id="KW-1133">Transmembrane helix</keyword>